<comment type="function">
    <text evidence="2">Core subunit of the mitochondrial membrane respiratory chain NADH dehydrogenase (Complex I) which catalyzes electron transfer from NADH through the respiratory chain, using ubiquinone as an electron acceptor. Part of the enzyme membrane arm which is embedded in the lipid bilayer and involved in proton translocation.</text>
</comment>
<comment type="catalytic activity">
    <reaction evidence="2">
        <text>a ubiquinone + NADH + 5 H(+)(in) = a ubiquinol + NAD(+) + 4 H(+)(out)</text>
        <dbReference type="Rhea" id="RHEA:29091"/>
        <dbReference type="Rhea" id="RHEA-COMP:9565"/>
        <dbReference type="Rhea" id="RHEA-COMP:9566"/>
        <dbReference type="ChEBI" id="CHEBI:15378"/>
        <dbReference type="ChEBI" id="CHEBI:16389"/>
        <dbReference type="ChEBI" id="CHEBI:17976"/>
        <dbReference type="ChEBI" id="CHEBI:57540"/>
        <dbReference type="ChEBI" id="CHEBI:57945"/>
        <dbReference type="EC" id="7.1.1.2"/>
    </reaction>
    <physiologicalReaction direction="left-to-right" evidence="2">
        <dbReference type="Rhea" id="RHEA:29092"/>
    </physiologicalReaction>
</comment>
<comment type="subcellular location">
    <subcellularLocation>
        <location evidence="1">Mitochondrion membrane</location>
        <topology evidence="1">Multi-pass membrane protein</topology>
    </subcellularLocation>
</comment>
<comment type="similarity">
    <text evidence="4">Belongs to the complex I subunit 4L family.</text>
</comment>
<keyword id="KW-0249">Electron transport</keyword>
<keyword id="KW-0472">Membrane</keyword>
<keyword id="KW-0496">Mitochondrion</keyword>
<keyword id="KW-0520">NAD</keyword>
<keyword id="KW-1185">Reference proteome</keyword>
<keyword id="KW-0679">Respiratory chain</keyword>
<keyword id="KW-1278">Translocase</keyword>
<keyword id="KW-0812">Transmembrane</keyword>
<keyword id="KW-1133">Transmembrane helix</keyword>
<keyword id="KW-0813">Transport</keyword>
<keyword id="KW-0830">Ubiquinone</keyword>
<dbReference type="EC" id="7.1.1.2"/>
<dbReference type="EMBL" id="DQ019313">
    <property type="protein sequence ID" value="AAY26168.1"/>
    <property type="molecule type" value="Genomic_DNA"/>
</dbReference>
<dbReference type="RefSeq" id="YP_009305211.1">
    <property type="nucleotide sequence ID" value="NC_031325.1"/>
</dbReference>
<dbReference type="SMR" id="Q4JQH9"/>
<dbReference type="FunCoup" id="Q4JQH9">
    <property type="interactions" value="124"/>
</dbReference>
<dbReference type="STRING" id="99883.ENSTNIP00000003869"/>
<dbReference type="Ensembl" id="ENSTNIT00000004002.1">
    <property type="protein sequence ID" value="ENSTNIP00000003869.1"/>
    <property type="gene ID" value="ENSTNIG00000000603.1"/>
</dbReference>
<dbReference type="GeneID" id="29141154"/>
<dbReference type="CTD" id="4539"/>
<dbReference type="GeneTree" id="ENSGT00940000164968"/>
<dbReference type="HOGENOM" id="CLU_182394_0_0_1"/>
<dbReference type="InParanoid" id="Q4JQH9"/>
<dbReference type="OMA" id="MYRSHLM"/>
<dbReference type="TreeFam" id="TF338190"/>
<dbReference type="Proteomes" id="UP000007303">
    <property type="component" value="Mitochondrion"/>
</dbReference>
<dbReference type="GO" id="GO:0031966">
    <property type="term" value="C:mitochondrial membrane"/>
    <property type="evidence" value="ECO:0007669"/>
    <property type="project" value="UniProtKB-SubCell"/>
</dbReference>
<dbReference type="GO" id="GO:0045271">
    <property type="term" value="C:respiratory chain complex I"/>
    <property type="evidence" value="ECO:0000250"/>
    <property type="project" value="UniProtKB"/>
</dbReference>
<dbReference type="GO" id="GO:0008137">
    <property type="term" value="F:NADH dehydrogenase (ubiquinone) activity"/>
    <property type="evidence" value="ECO:0000250"/>
    <property type="project" value="UniProtKB"/>
</dbReference>
<dbReference type="GO" id="GO:0042773">
    <property type="term" value="P:ATP synthesis coupled electron transport"/>
    <property type="evidence" value="ECO:0007669"/>
    <property type="project" value="InterPro"/>
</dbReference>
<dbReference type="FunFam" id="1.10.287.3510:FF:000002">
    <property type="entry name" value="NADH-ubiquinone oxidoreductase chain 4L"/>
    <property type="match status" value="1"/>
</dbReference>
<dbReference type="Gene3D" id="1.10.287.3510">
    <property type="match status" value="1"/>
</dbReference>
<dbReference type="InterPro" id="IPR001133">
    <property type="entry name" value="NADH_UbQ_OxRdtase_chain4L/K"/>
</dbReference>
<dbReference type="InterPro" id="IPR039428">
    <property type="entry name" value="NUOK/Mnh_C1-like"/>
</dbReference>
<dbReference type="PANTHER" id="PTHR11434:SF0">
    <property type="entry name" value="NADH-UBIQUINONE OXIDOREDUCTASE CHAIN 4L"/>
    <property type="match status" value="1"/>
</dbReference>
<dbReference type="PANTHER" id="PTHR11434">
    <property type="entry name" value="NADH-UBIQUINONE OXIDOREDUCTASE SUBUNIT ND4L"/>
    <property type="match status" value="1"/>
</dbReference>
<dbReference type="Pfam" id="PF00420">
    <property type="entry name" value="Oxidored_q2"/>
    <property type="match status" value="1"/>
</dbReference>
<feature type="chain" id="PRO_0000118495" description="NADH-ubiquinone oxidoreductase chain 4L">
    <location>
        <begin position="1"/>
        <end position="98"/>
    </location>
</feature>
<feature type="transmembrane region" description="Helical" evidence="3">
    <location>
        <begin position="1"/>
        <end position="21"/>
    </location>
</feature>
<feature type="transmembrane region" description="Helical" evidence="3">
    <location>
        <begin position="26"/>
        <end position="46"/>
    </location>
</feature>
<feature type="transmembrane region" description="Helical" evidence="3">
    <location>
        <begin position="59"/>
        <end position="79"/>
    </location>
</feature>
<gene>
    <name type="primary">MT-ND4L</name>
    <name type="synonym">MTND4L</name>
    <name type="synonym">NADH4L</name>
    <name type="synonym">ND4L</name>
</gene>
<protein>
    <recommendedName>
        <fullName>NADH-ubiquinone oxidoreductase chain 4L</fullName>
        <ecNumber>7.1.1.2</ecNumber>
    </recommendedName>
    <alternativeName>
        <fullName>NADH dehydrogenase subunit 4L</fullName>
    </alternativeName>
</protein>
<accession>Q4JQH9</accession>
<reference key="1">
    <citation type="journal article" date="2006" name="DNA Seq.">
        <title>The complete nucleotide sequence of the mitochondrial genome of Tetraodon nigroviridis.</title>
        <authorList>
            <person name="Yue G.H."/>
            <person name="Lo L.C."/>
            <person name="Zhu Z.Y."/>
            <person name="Lin G."/>
            <person name="Feng F."/>
        </authorList>
    </citation>
    <scope>NUCLEOTIDE SEQUENCE [LARGE SCALE GENOMIC DNA]</scope>
</reference>
<name>NU4LM_TETNG</name>
<organism>
    <name type="scientific">Tetraodon nigroviridis</name>
    <name type="common">Spotted green pufferfish</name>
    <name type="synonym">Chelonodon nigroviridis</name>
    <dbReference type="NCBI Taxonomy" id="99883"/>
    <lineage>
        <taxon>Eukaryota</taxon>
        <taxon>Metazoa</taxon>
        <taxon>Chordata</taxon>
        <taxon>Craniata</taxon>
        <taxon>Vertebrata</taxon>
        <taxon>Euteleostomi</taxon>
        <taxon>Actinopterygii</taxon>
        <taxon>Neopterygii</taxon>
        <taxon>Teleostei</taxon>
        <taxon>Neoteleostei</taxon>
        <taxon>Acanthomorphata</taxon>
        <taxon>Eupercaria</taxon>
        <taxon>Tetraodontiformes</taxon>
        <taxon>Tetradontoidea</taxon>
        <taxon>Tetraodontidae</taxon>
        <taxon>Tetraodon</taxon>
    </lineage>
</organism>
<proteinExistence type="inferred from homology"/>
<geneLocation type="mitochondrion"/>
<evidence type="ECO:0000250" key="1"/>
<evidence type="ECO:0000250" key="2">
    <source>
        <dbReference type="UniProtKB" id="P03901"/>
    </source>
</evidence>
<evidence type="ECO:0000255" key="3"/>
<evidence type="ECO:0000305" key="4"/>
<sequence>MTPIQFTFSSAFLLGLSGLAFHRTHLLSALLCLEGMMLSLFIALSLWSLQLSSISFSSAPMLLLAFSACEASVGLALMVATARTHGSDHLQGLNLLQC</sequence>